<keyword id="KW-1015">Disulfide bond</keyword>
<keyword id="KW-0325">Glycoprotein</keyword>
<keyword id="KW-0372">Hormone</keyword>
<keyword id="KW-0964">Secreted</keyword>
<keyword id="KW-0732">Signal</keyword>
<sequence length="120" mass="13685">MDYYRKYAAVFLVMLSMFLHSLHSLPDGDLIIQGCPECKLKENKYFSRLGNPVYQCMGCCFSRAYPTPARSKKTMLVPKNITSEATCCVAKSFTKTTVLGYARVENHTECHCSTCYYHKV</sequence>
<protein>
    <recommendedName>
        <fullName>Glycoprotein hormones alpha chain</fullName>
    </recommendedName>
    <alternativeName>
        <fullName>Anterior pituitary glycoprotein hormones common subunit alpha</fullName>
    </alternativeName>
    <alternativeName>
        <fullName>Follicle-stimulating hormone alpha chain</fullName>
        <shortName>FSH-alpha</shortName>
    </alternativeName>
    <alternativeName>
        <fullName>Follitropin alpha chain</fullName>
    </alternativeName>
    <alternativeName>
        <fullName>Luteinizing hormone alpha chain</fullName>
        <shortName>LSH-alpha</shortName>
    </alternativeName>
    <alternativeName>
        <fullName>Lutropin alpha chain</fullName>
    </alternativeName>
    <alternativeName>
        <fullName>Thyroid-stimulating hormone alpha chain</fullName>
        <shortName>TSH-alpha</shortName>
    </alternativeName>
    <alternativeName>
        <fullName>Thyrotropin alpha chain</fullName>
    </alternativeName>
</protein>
<proteinExistence type="evidence at transcript level"/>
<name>GLHA_ALEMO</name>
<evidence type="ECO:0000250" key="1"/>
<evidence type="ECO:0000250" key="2">
    <source>
        <dbReference type="UniProtKB" id="P01215"/>
    </source>
</evidence>
<evidence type="ECO:0000305" key="3"/>
<feature type="signal peptide" evidence="1">
    <location>
        <begin position="1"/>
        <end position="24"/>
    </location>
</feature>
<feature type="chain" id="PRO_0000011647" description="Glycoprotein hormones alpha chain">
    <location>
        <begin position="25"/>
        <end position="120"/>
    </location>
</feature>
<feature type="glycosylation site" description="N-linked (GlcNAc...) asparagine" evidence="2">
    <location>
        <position position="80"/>
    </location>
</feature>
<feature type="glycosylation site" description="N-linked (GlcNAc...) asparagine" evidence="2">
    <location>
        <position position="106"/>
    </location>
</feature>
<feature type="disulfide bond" evidence="2">
    <location>
        <begin position="35"/>
        <end position="59"/>
    </location>
</feature>
<feature type="disulfide bond" evidence="2">
    <location>
        <begin position="38"/>
        <end position="88"/>
    </location>
</feature>
<feature type="disulfide bond" evidence="2">
    <location>
        <begin position="56"/>
        <end position="110"/>
    </location>
</feature>
<feature type="disulfide bond" evidence="2">
    <location>
        <begin position="60"/>
        <end position="112"/>
    </location>
</feature>
<feature type="disulfide bond" evidence="2">
    <location>
        <begin position="87"/>
        <end position="115"/>
    </location>
</feature>
<reference key="1">
    <citation type="journal article" date="2002" name="Mol. Reprod. Dev.">
        <title>Comparison of glycoprotein hormone alpha-subunits of laboratory animals.</title>
        <authorList>
            <person name="Suzuki O."/>
            <person name="Mochida K."/>
            <person name="Yamamoto Y."/>
            <person name="Noguchi Y."/>
            <person name="Takano K."/>
            <person name="Matsuda J."/>
            <person name="Ogura A."/>
        </authorList>
    </citation>
    <scope>NUCLEOTIDE SEQUENCE [MRNA]</scope>
    <source>
        <tissue>Pituitary</tissue>
    </source>
</reference>
<comment type="function">
    <text evidence="2">Shared alpha chain of the active heterodimeric glycoprotein hormones thyrotropin/thyroid stimulating hormone/TSH, lutropin/luteinizing hormone/LH and follitropin/follicle stimulating hormone/FSH. These hormones bind specific receptors on target cells that in turn activate downstream signaling pathways.</text>
</comment>
<comment type="subunit">
    <text evidence="2">Heterodimer. The active hormones thyrotropin, lutropin and follitropin are heterodimers composed of CGA, a common alpha chain described here and a unique beta chain which confers their biological specificity to the hormones: TSHB for thyrotropin, LHB for lutropin and FSHB for follitropin.</text>
</comment>
<comment type="subcellular location">
    <subcellularLocation>
        <location evidence="2">Secreted</location>
    </subcellularLocation>
</comment>
<comment type="similarity">
    <text evidence="3">Belongs to the glycoprotein hormones subunit alpha family.</text>
</comment>
<accession>Q9ERG3</accession>
<dbReference type="EMBL" id="AF307150">
    <property type="protein sequence ID" value="AAG30278.1"/>
    <property type="molecule type" value="mRNA"/>
</dbReference>
<dbReference type="SMR" id="Q9ERG3"/>
<dbReference type="GlyCosmos" id="Q9ERG3">
    <property type="glycosylation" value="2 sites, No reported glycans"/>
</dbReference>
<dbReference type="GO" id="GO:0005615">
    <property type="term" value="C:extracellular space"/>
    <property type="evidence" value="ECO:0000250"/>
    <property type="project" value="UniProtKB"/>
</dbReference>
<dbReference type="GO" id="GO:0016914">
    <property type="term" value="C:follicle-stimulating hormone complex"/>
    <property type="evidence" value="ECO:0000250"/>
    <property type="project" value="UniProtKB"/>
</dbReference>
<dbReference type="GO" id="GO:0016913">
    <property type="term" value="F:follicle-stimulating hormone activity"/>
    <property type="evidence" value="ECO:0000250"/>
    <property type="project" value="UniProtKB"/>
</dbReference>
<dbReference type="GO" id="GO:0007186">
    <property type="term" value="P:G protein-coupled receptor signaling pathway"/>
    <property type="evidence" value="ECO:0000250"/>
    <property type="project" value="UniProtKB"/>
</dbReference>
<dbReference type="GO" id="GO:0010893">
    <property type="term" value="P:positive regulation of steroid biosynthetic process"/>
    <property type="evidence" value="ECO:0000250"/>
    <property type="project" value="UniProtKB"/>
</dbReference>
<dbReference type="GO" id="GO:0010469">
    <property type="term" value="P:regulation of signaling receptor activity"/>
    <property type="evidence" value="ECO:0000250"/>
    <property type="project" value="UniProtKB"/>
</dbReference>
<dbReference type="GO" id="GO:0006590">
    <property type="term" value="P:thyroid hormone generation"/>
    <property type="evidence" value="ECO:0007669"/>
    <property type="project" value="TreeGrafter"/>
</dbReference>
<dbReference type="FunFam" id="2.10.90.10:FF:000011">
    <property type="entry name" value="Glycoprotein hormones alpha chain"/>
    <property type="match status" value="1"/>
</dbReference>
<dbReference type="Gene3D" id="2.10.90.10">
    <property type="entry name" value="Cystine-knot cytokines"/>
    <property type="match status" value="1"/>
</dbReference>
<dbReference type="InterPro" id="IPR029034">
    <property type="entry name" value="Cystine-knot_cytokine"/>
</dbReference>
<dbReference type="InterPro" id="IPR000476">
    <property type="entry name" value="Glyco_hormone"/>
</dbReference>
<dbReference type="PANTHER" id="PTHR11509">
    <property type="entry name" value="GLYCOPROTEIN HORMONE ALPHA CHAIN"/>
    <property type="match status" value="1"/>
</dbReference>
<dbReference type="PANTHER" id="PTHR11509:SF0">
    <property type="entry name" value="GLYCOPROTEIN HORMONES ALPHA CHAIN"/>
    <property type="match status" value="1"/>
</dbReference>
<dbReference type="Pfam" id="PF00236">
    <property type="entry name" value="Hormone_6"/>
    <property type="match status" value="1"/>
</dbReference>
<dbReference type="PRINTS" id="PR00274">
    <property type="entry name" value="GLYCOHORMONE"/>
</dbReference>
<dbReference type="SMART" id="SM00067">
    <property type="entry name" value="GHA"/>
    <property type="match status" value="1"/>
</dbReference>
<dbReference type="SUPFAM" id="SSF57501">
    <property type="entry name" value="Cystine-knot cytokines"/>
    <property type="match status" value="1"/>
</dbReference>
<dbReference type="PROSITE" id="PS00779">
    <property type="entry name" value="GLYCO_HORMONE_ALPHA_1"/>
    <property type="match status" value="1"/>
</dbReference>
<dbReference type="PROSITE" id="PS00780">
    <property type="entry name" value="GLYCO_HORMONE_ALPHA_2"/>
    <property type="match status" value="1"/>
</dbReference>
<dbReference type="PROSITE" id="PS50277">
    <property type="entry name" value="GLYCO_HORMONE_ALPHA_3"/>
    <property type="match status" value="1"/>
</dbReference>
<organism>
    <name type="scientific">Alexandromys montebelli</name>
    <name type="common">Japanese grass vole</name>
    <name type="synonym">Microtus montebelli</name>
    <dbReference type="NCBI Taxonomy" id="3369701"/>
    <lineage>
        <taxon>Eukaryota</taxon>
        <taxon>Metazoa</taxon>
        <taxon>Chordata</taxon>
        <taxon>Craniata</taxon>
        <taxon>Vertebrata</taxon>
        <taxon>Euteleostomi</taxon>
        <taxon>Mammalia</taxon>
        <taxon>Eutheria</taxon>
        <taxon>Euarchontoglires</taxon>
        <taxon>Glires</taxon>
        <taxon>Rodentia</taxon>
        <taxon>Myomorpha</taxon>
        <taxon>Muroidea</taxon>
        <taxon>Cricetidae</taxon>
        <taxon>Arvicolinae</taxon>
        <taxon>Alexandromys</taxon>
    </lineage>
</organism>
<gene>
    <name type="primary">CGA</name>
</gene>